<sequence>MARVSGVDIPREKRVEVALTYVFGIGRTLSQKTLAETGVNPNTRVRDLSEEELVRIREYVDNNFKTEGDLRREVQADIRRKVEIGCYQGLRHRRGLPVHGQRTSTNARTRKGPRRAIAGKKKPGKK</sequence>
<protein>
    <recommendedName>
        <fullName evidence="1">Small ribosomal subunit protein uS13</fullName>
    </recommendedName>
    <alternativeName>
        <fullName evidence="3">30S ribosomal protein S13</fullName>
    </alternativeName>
</protein>
<comment type="function">
    <text evidence="1">Located at the top of the head of the 30S subunit, it contacts several helices of the 16S rRNA. In the 70S ribosome it contacts the 23S rRNA (bridge B1a) and protein L5 of the 50S subunit (bridge B1b), connecting the 2 subunits; these bridges are implicated in subunit movement. Contacts the tRNAs in the A and P-sites.</text>
</comment>
<comment type="subunit">
    <text evidence="1">Part of the 30S ribosomal subunit. Forms a loose heterodimer with protein S19. Forms two bridges to the 50S subunit in the 70S ribosome.</text>
</comment>
<comment type="similarity">
    <text evidence="1">Belongs to the universal ribosomal protein uS13 family.</text>
</comment>
<dbReference type="EMBL" id="BA000030">
    <property type="protein sequence ID" value="BAC72663.1"/>
    <property type="molecule type" value="Genomic_DNA"/>
</dbReference>
<dbReference type="RefSeq" id="WP_010986359.1">
    <property type="nucleotide sequence ID" value="NZ_JZJK01000077.1"/>
</dbReference>
<dbReference type="SMR" id="P59756"/>
<dbReference type="GeneID" id="41542034"/>
<dbReference type="KEGG" id="sma:SAVERM_4951"/>
<dbReference type="eggNOG" id="COG0099">
    <property type="taxonomic scope" value="Bacteria"/>
</dbReference>
<dbReference type="HOGENOM" id="CLU_103849_1_2_11"/>
<dbReference type="OrthoDB" id="9803610at2"/>
<dbReference type="Proteomes" id="UP000000428">
    <property type="component" value="Chromosome"/>
</dbReference>
<dbReference type="GO" id="GO:0005829">
    <property type="term" value="C:cytosol"/>
    <property type="evidence" value="ECO:0007669"/>
    <property type="project" value="TreeGrafter"/>
</dbReference>
<dbReference type="GO" id="GO:0015935">
    <property type="term" value="C:small ribosomal subunit"/>
    <property type="evidence" value="ECO:0007669"/>
    <property type="project" value="TreeGrafter"/>
</dbReference>
<dbReference type="GO" id="GO:0019843">
    <property type="term" value="F:rRNA binding"/>
    <property type="evidence" value="ECO:0007669"/>
    <property type="project" value="UniProtKB-UniRule"/>
</dbReference>
<dbReference type="GO" id="GO:0003735">
    <property type="term" value="F:structural constituent of ribosome"/>
    <property type="evidence" value="ECO:0007669"/>
    <property type="project" value="InterPro"/>
</dbReference>
<dbReference type="GO" id="GO:0000049">
    <property type="term" value="F:tRNA binding"/>
    <property type="evidence" value="ECO:0007669"/>
    <property type="project" value="UniProtKB-UniRule"/>
</dbReference>
<dbReference type="GO" id="GO:0006412">
    <property type="term" value="P:translation"/>
    <property type="evidence" value="ECO:0007669"/>
    <property type="project" value="UniProtKB-UniRule"/>
</dbReference>
<dbReference type="FunFam" id="1.10.8.50:FF:000001">
    <property type="entry name" value="30S ribosomal protein S13"/>
    <property type="match status" value="1"/>
</dbReference>
<dbReference type="FunFam" id="4.10.910.10:FF:000001">
    <property type="entry name" value="30S ribosomal protein S13"/>
    <property type="match status" value="1"/>
</dbReference>
<dbReference type="Gene3D" id="1.10.8.50">
    <property type="match status" value="1"/>
</dbReference>
<dbReference type="Gene3D" id="4.10.910.10">
    <property type="entry name" value="30s ribosomal protein s13, domain 2"/>
    <property type="match status" value="1"/>
</dbReference>
<dbReference type="HAMAP" id="MF_01315">
    <property type="entry name" value="Ribosomal_uS13"/>
    <property type="match status" value="1"/>
</dbReference>
<dbReference type="InterPro" id="IPR027437">
    <property type="entry name" value="Rbsml_uS13_C"/>
</dbReference>
<dbReference type="InterPro" id="IPR001892">
    <property type="entry name" value="Ribosomal_uS13"/>
</dbReference>
<dbReference type="InterPro" id="IPR010979">
    <property type="entry name" value="Ribosomal_uS13-like_H2TH"/>
</dbReference>
<dbReference type="InterPro" id="IPR019980">
    <property type="entry name" value="Ribosomal_uS13_bac-type"/>
</dbReference>
<dbReference type="InterPro" id="IPR018269">
    <property type="entry name" value="Ribosomal_uS13_CS"/>
</dbReference>
<dbReference type="NCBIfam" id="TIGR03631">
    <property type="entry name" value="uS13_bact"/>
    <property type="match status" value="1"/>
</dbReference>
<dbReference type="PANTHER" id="PTHR10871">
    <property type="entry name" value="30S RIBOSOMAL PROTEIN S13/40S RIBOSOMAL PROTEIN S18"/>
    <property type="match status" value="1"/>
</dbReference>
<dbReference type="PANTHER" id="PTHR10871:SF1">
    <property type="entry name" value="SMALL RIBOSOMAL SUBUNIT PROTEIN US13M"/>
    <property type="match status" value="1"/>
</dbReference>
<dbReference type="Pfam" id="PF00416">
    <property type="entry name" value="Ribosomal_S13"/>
    <property type="match status" value="1"/>
</dbReference>
<dbReference type="PIRSF" id="PIRSF002134">
    <property type="entry name" value="Ribosomal_S13"/>
    <property type="match status" value="1"/>
</dbReference>
<dbReference type="SUPFAM" id="SSF46946">
    <property type="entry name" value="S13-like H2TH domain"/>
    <property type="match status" value="1"/>
</dbReference>
<dbReference type="PROSITE" id="PS00646">
    <property type="entry name" value="RIBOSOMAL_S13_1"/>
    <property type="match status" value="1"/>
</dbReference>
<dbReference type="PROSITE" id="PS50159">
    <property type="entry name" value="RIBOSOMAL_S13_2"/>
    <property type="match status" value="1"/>
</dbReference>
<name>RS13_STRAW</name>
<evidence type="ECO:0000255" key="1">
    <source>
        <dbReference type="HAMAP-Rule" id="MF_01315"/>
    </source>
</evidence>
<evidence type="ECO:0000256" key="2">
    <source>
        <dbReference type="SAM" id="MobiDB-lite"/>
    </source>
</evidence>
<evidence type="ECO:0000305" key="3"/>
<accession>P59756</accession>
<reference key="1">
    <citation type="journal article" date="2001" name="Proc. Natl. Acad. Sci. U.S.A.">
        <title>Genome sequence of an industrial microorganism Streptomyces avermitilis: deducing the ability of producing secondary metabolites.</title>
        <authorList>
            <person name="Omura S."/>
            <person name="Ikeda H."/>
            <person name="Ishikawa J."/>
            <person name="Hanamoto A."/>
            <person name="Takahashi C."/>
            <person name="Shinose M."/>
            <person name="Takahashi Y."/>
            <person name="Horikawa H."/>
            <person name="Nakazawa H."/>
            <person name="Osonoe T."/>
            <person name="Kikuchi H."/>
            <person name="Shiba T."/>
            <person name="Sakaki Y."/>
            <person name="Hattori M."/>
        </authorList>
    </citation>
    <scope>NUCLEOTIDE SEQUENCE [LARGE SCALE GENOMIC DNA]</scope>
    <source>
        <strain>ATCC 31267 / DSM 46492 / JCM 5070 / NBRC 14893 / NCIMB 12804 / NRRL 8165 / MA-4680</strain>
    </source>
</reference>
<reference key="2">
    <citation type="journal article" date="2003" name="Nat. Biotechnol.">
        <title>Complete genome sequence and comparative analysis of the industrial microorganism Streptomyces avermitilis.</title>
        <authorList>
            <person name="Ikeda H."/>
            <person name="Ishikawa J."/>
            <person name="Hanamoto A."/>
            <person name="Shinose M."/>
            <person name="Kikuchi H."/>
            <person name="Shiba T."/>
            <person name="Sakaki Y."/>
            <person name="Hattori M."/>
            <person name="Omura S."/>
        </authorList>
    </citation>
    <scope>NUCLEOTIDE SEQUENCE [LARGE SCALE GENOMIC DNA]</scope>
    <source>
        <strain>ATCC 31267 / DSM 46492 / JCM 5070 / NBRC 14893 / NCIMB 12804 / NRRL 8165 / MA-4680</strain>
    </source>
</reference>
<keyword id="KW-1185">Reference proteome</keyword>
<keyword id="KW-0687">Ribonucleoprotein</keyword>
<keyword id="KW-0689">Ribosomal protein</keyword>
<keyword id="KW-0694">RNA-binding</keyword>
<keyword id="KW-0699">rRNA-binding</keyword>
<keyword id="KW-0820">tRNA-binding</keyword>
<organism>
    <name type="scientific">Streptomyces avermitilis (strain ATCC 31267 / DSM 46492 / JCM 5070 / NBRC 14893 / NCIMB 12804 / NRRL 8165 / MA-4680)</name>
    <dbReference type="NCBI Taxonomy" id="227882"/>
    <lineage>
        <taxon>Bacteria</taxon>
        <taxon>Bacillati</taxon>
        <taxon>Actinomycetota</taxon>
        <taxon>Actinomycetes</taxon>
        <taxon>Kitasatosporales</taxon>
        <taxon>Streptomycetaceae</taxon>
        <taxon>Streptomyces</taxon>
    </lineage>
</organism>
<feature type="chain" id="PRO_0000132146" description="Small ribosomal subunit protein uS13">
    <location>
        <begin position="1"/>
        <end position="126"/>
    </location>
</feature>
<feature type="region of interest" description="Disordered" evidence="2">
    <location>
        <begin position="94"/>
        <end position="126"/>
    </location>
</feature>
<feature type="compositionally biased region" description="Basic residues" evidence="2">
    <location>
        <begin position="108"/>
        <end position="126"/>
    </location>
</feature>
<proteinExistence type="inferred from homology"/>
<gene>
    <name evidence="1" type="primary">rpsM</name>
    <name type="ordered locus">SAV_4951</name>
</gene>